<sequence>MEAPLQTGMMGTSSHGLATNSSGAKVAERDGFQDVLAPGEGSAGRICGAQPVPFVPQVLGVMIGAGVAVVVTAVLILLVVRRLRVPKTPAPDGPRYRFRKRDKVLFYGRKIMRKVSQSTSSLVDTSVSATSRPRMRKKLKMLNIAKKILRIQKETPTLQRKEPPPAVLEADLTEGDLANSHLPSEVLYMLKNVRVLGHFEKPLFLELCRHMVFQRLGQGDYVFRPGQPDASIYVVQDGLLELCLPGPDGKECVVKEVVPGDSVNSLLSILDVITGHQHPQRTVSARAARDSTVLRLPVEAFSAVFTKYPESLVRVVQIIMVRLQRVTFLALHNYLGLTNELFSHEIQPLRLFPSPGLPTRTSPVRGSKRMVSTSATDEPRETPGRPPDPTGAPLPGPTGDPVKPTSLETPSAPLLSRCVSMPGDISGLQGGPRSDFDMAYERGRISVSLQEEASGGSLAAPARTPTQEPREQPAGACEYSYCEDESATGGCPFGPYQGRQTSSIFEAAKQELAKLMRIEDPSLLNSRVLLHHAKAGTIIARQGDQDVSLHFVLWGCLHVYQRMIDKAEDVCLFVAQPGELVGQLAVLTGEPLIFTLRAQRDCTFLRISKSDFYEIMRAQPSVVLSAAHTVAARMSPFVRQMDFAIDWTAVEAGRALYRQGDRSDCTYIVLNGRLRSVIQRGSGKKELVGEYGRGDLIGVVEALTRQPRATTVHAVRDTELAKLPEGTLGHIKRRYPQVVTRLIHLLSQKILGNLQQLQGPFPAGSGLGVPPHSELTNPASNLATVAILPVCAEVPMVAFTLELQHALQAIGPTLLLNSDIIRARLGASALDSIQEFRLSGWLAQQEDAHRIVLYQTDASLTPWTVRCLRQADCILIVGLGDQEPTLGQLEQMLENTAVRALKQLVLLHREEGAGPTRTVEWLNMRSWCSGHLHLRCPRRLFSRRSPAKLHELYEKVFSRRADRHSDFSRLARVLTGNTIALVLGGGGARGCSHIGVLKALEEAGVPVDLVGGTSIGSFIGALYAEERSASRTKQRAREWAKSMTSVLEPVLDLTYPVTSMFTGSAFNRSIHRVFQDKQIEDLWLPYFNVTTDITASAMRVHKDGSLWRYVRASMTLSGYLPPLCDPKDGHLLMDGGYINNLPADIARSMGAKTVIAIDVGSQDETDLSTYGDSLSGWWLLWKRLNPWADKVKVPDMAEIQSRLAYVSCVRQLEVVKSSSYCEYLRPPIDCFKTMDFGKFDQIYDVGYQYGKAVFGGWSRGNVIEKMLTDRRSTDLNESRRADVLAFPSSGFTDLAEIVSRIEPPTSYVSDGCADGEESDCLTEYEEDAGPDCSRDEGGSPEGASPSTASEMEEEKSILRQRRCLPQEPPGSATDA</sequence>
<reference key="1">
    <citation type="journal article" date="1998" name="Biochem. J.">
        <title>Neuropathy target esterase and a homologous Drosophila neurodegeneration-associated mutant protein contain a novel domain conserved from bacteria to man.</title>
        <authorList>
            <person name="Lush M.J."/>
            <person name="Li Y."/>
            <person name="Read D.J."/>
            <person name="Willis A.C."/>
            <person name="Glynn P."/>
        </authorList>
    </citation>
    <scope>NUCLEOTIDE SEQUENCE [MRNA] (ISOFORM 2)</scope>
    <scope>GLYCOSYLATION</scope>
    <scope>TISSUE SPECIFICITY</scope>
    <source>
        <tissue>Fetal brain</tissue>
    </source>
</reference>
<reference key="2">
    <citation type="journal article" date="2004" name="Nat. Genet.">
        <title>Complete sequencing and characterization of 21,243 full-length human cDNAs.</title>
        <authorList>
            <person name="Ota T."/>
            <person name="Suzuki Y."/>
            <person name="Nishikawa T."/>
            <person name="Otsuki T."/>
            <person name="Sugiyama T."/>
            <person name="Irie R."/>
            <person name="Wakamatsu A."/>
            <person name="Hayashi K."/>
            <person name="Sato H."/>
            <person name="Nagai K."/>
            <person name="Kimura K."/>
            <person name="Makita H."/>
            <person name="Sekine M."/>
            <person name="Obayashi M."/>
            <person name="Nishi T."/>
            <person name="Shibahara T."/>
            <person name="Tanaka T."/>
            <person name="Ishii S."/>
            <person name="Yamamoto J."/>
            <person name="Saito K."/>
            <person name="Kawai Y."/>
            <person name="Isono Y."/>
            <person name="Nakamura Y."/>
            <person name="Nagahari K."/>
            <person name="Murakami K."/>
            <person name="Yasuda T."/>
            <person name="Iwayanagi T."/>
            <person name="Wagatsuma M."/>
            <person name="Shiratori A."/>
            <person name="Sudo H."/>
            <person name="Hosoiri T."/>
            <person name="Kaku Y."/>
            <person name="Kodaira H."/>
            <person name="Kondo H."/>
            <person name="Sugawara M."/>
            <person name="Takahashi M."/>
            <person name="Kanda K."/>
            <person name="Yokoi T."/>
            <person name="Furuya T."/>
            <person name="Kikkawa E."/>
            <person name="Omura Y."/>
            <person name="Abe K."/>
            <person name="Kamihara K."/>
            <person name="Katsuta N."/>
            <person name="Sato K."/>
            <person name="Tanikawa M."/>
            <person name="Yamazaki M."/>
            <person name="Ninomiya K."/>
            <person name="Ishibashi T."/>
            <person name="Yamashita H."/>
            <person name="Murakawa K."/>
            <person name="Fujimori K."/>
            <person name="Tanai H."/>
            <person name="Kimata M."/>
            <person name="Watanabe M."/>
            <person name="Hiraoka S."/>
            <person name="Chiba Y."/>
            <person name="Ishida S."/>
            <person name="Ono Y."/>
            <person name="Takiguchi S."/>
            <person name="Watanabe S."/>
            <person name="Yosida M."/>
            <person name="Hotuta T."/>
            <person name="Kusano J."/>
            <person name="Kanehori K."/>
            <person name="Takahashi-Fujii A."/>
            <person name="Hara H."/>
            <person name="Tanase T.-O."/>
            <person name="Nomura Y."/>
            <person name="Togiya S."/>
            <person name="Komai F."/>
            <person name="Hara R."/>
            <person name="Takeuchi K."/>
            <person name="Arita M."/>
            <person name="Imose N."/>
            <person name="Musashino K."/>
            <person name="Yuuki H."/>
            <person name="Oshima A."/>
            <person name="Sasaki N."/>
            <person name="Aotsuka S."/>
            <person name="Yoshikawa Y."/>
            <person name="Matsunawa H."/>
            <person name="Ichihara T."/>
            <person name="Shiohata N."/>
            <person name="Sano S."/>
            <person name="Moriya S."/>
            <person name="Momiyama H."/>
            <person name="Satoh N."/>
            <person name="Takami S."/>
            <person name="Terashima Y."/>
            <person name="Suzuki O."/>
            <person name="Nakagawa S."/>
            <person name="Senoh A."/>
            <person name="Mizoguchi H."/>
            <person name="Goto Y."/>
            <person name="Shimizu F."/>
            <person name="Wakebe H."/>
            <person name="Hishigaki H."/>
            <person name="Watanabe T."/>
            <person name="Sugiyama A."/>
            <person name="Takemoto M."/>
            <person name="Kawakami B."/>
            <person name="Yamazaki M."/>
            <person name="Watanabe K."/>
            <person name="Kumagai A."/>
            <person name="Itakura S."/>
            <person name="Fukuzumi Y."/>
            <person name="Fujimori Y."/>
            <person name="Komiyama M."/>
            <person name="Tashiro H."/>
            <person name="Tanigami A."/>
            <person name="Fujiwara T."/>
            <person name="Ono T."/>
            <person name="Yamada K."/>
            <person name="Fujii Y."/>
            <person name="Ozaki K."/>
            <person name="Hirao M."/>
            <person name="Ohmori Y."/>
            <person name="Kawabata A."/>
            <person name="Hikiji T."/>
            <person name="Kobatake N."/>
            <person name="Inagaki H."/>
            <person name="Ikema Y."/>
            <person name="Okamoto S."/>
            <person name="Okitani R."/>
            <person name="Kawakami T."/>
            <person name="Noguchi S."/>
            <person name="Itoh T."/>
            <person name="Shigeta K."/>
            <person name="Senba T."/>
            <person name="Matsumura K."/>
            <person name="Nakajima Y."/>
            <person name="Mizuno T."/>
            <person name="Morinaga M."/>
            <person name="Sasaki M."/>
            <person name="Togashi T."/>
            <person name="Oyama M."/>
            <person name="Hata H."/>
            <person name="Watanabe M."/>
            <person name="Komatsu T."/>
            <person name="Mizushima-Sugano J."/>
            <person name="Satoh T."/>
            <person name="Shirai Y."/>
            <person name="Takahashi Y."/>
            <person name="Nakagawa K."/>
            <person name="Okumura K."/>
            <person name="Nagase T."/>
            <person name="Nomura N."/>
            <person name="Kikuchi H."/>
            <person name="Masuho Y."/>
            <person name="Yamashita R."/>
            <person name="Nakai K."/>
            <person name="Yada T."/>
            <person name="Nakamura Y."/>
            <person name="Ohara O."/>
            <person name="Isogai T."/>
            <person name="Sugano S."/>
        </authorList>
    </citation>
    <scope>NUCLEOTIDE SEQUENCE [LARGE SCALE MRNA] (ISOFORMS 4 AND 5)</scope>
    <scope>VARIANT PRO-412</scope>
    <source>
        <tissue>Cerebellum</tissue>
    </source>
</reference>
<reference key="3">
    <citation type="journal article" date="2004" name="Nature">
        <title>The DNA sequence and biology of human chromosome 19.</title>
        <authorList>
            <person name="Grimwood J."/>
            <person name="Gordon L.A."/>
            <person name="Olsen A.S."/>
            <person name="Terry A."/>
            <person name="Schmutz J."/>
            <person name="Lamerdin J.E."/>
            <person name="Hellsten U."/>
            <person name="Goodstein D."/>
            <person name="Couronne O."/>
            <person name="Tran-Gyamfi M."/>
            <person name="Aerts A."/>
            <person name="Altherr M."/>
            <person name="Ashworth L."/>
            <person name="Bajorek E."/>
            <person name="Black S."/>
            <person name="Branscomb E."/>
            <person name="Caenepeel S."/>
            <person name="Carrano A.V."/>
            <person name="Caoile C."/>
            <person name="Chan Y.M."/>
            <person name="Christensen M."/>
            <person name="Cleland C.A."/>
            <person name="Copeland A."/>
            <person name="Dalin E."/>
            <person name="Dehal P."/>
            <person name="Denys M."/>
            <person name="Detter J.C."/>
            <person name="Escobar J."/>
            <person name="Flowers D."/>
            <person name="Fotopulos D."/>
            <person name="Garcia C."/>
            <person name="Georgescu A.M."/>
            <person name="Glavina T."/>
            <person name="Gomez M."/>
            <person name="Gonzales E."/>
            <person name="Groza M."/>
            <person name="Hammon N."/>
            <person name="Hawkins T."/>
            <person name="Haydu L."/>
            <person name="Ho I."/>
            <person name="Huang W."/>
            <person name="Israni S."/>
            <person name="Jett J."/>
            <person name="Kadner K."/>
            <person name="Kimball H."/>
            <person name="Kobayashi A."/>
            <person name="Larionov V."/>
            <person name="Leem S.-H."/>
            <person name="Lopez F."/>
            <person name="Lou Y."/>
            <person name="Lowry S."/>
            <person name="Malfatti S."/>
            <person name="Martinez D."/>
            <person name="McCready P.M."/>
            <person name="Medina C."/>
            <person name="Morgan J."/>
            <person name="Nelson K."/>
            <person name="Nolan M."/>
            <person name="Ovcharenko I."/>
            <person name="Pitluck S."/>
            <person name="Pollard M."/>
            <person name="Popkie A.P."/>
            <person name="Predki P."/>
            <person name="Quan G."/>
            <person name="Ramirez L."/>
            <person name="Rash S."/>
            <person name="Retterer J."/>
            <person name="Rodriguez A."/>
            <person name="Rogers S."/>
            <person name="Salamov A."/>
            <person name="Salazar A."/>
            <person name="She X."/>
            <person name="Smith D."/>
            <person name="Slezak T."/>
            <person name="Solovyev V."/>
            <person name="Thayer N."/>
            <person name="Tice H."/>
            <person name="Tsai M."/>
            <person name="Ustaszewska A."/>
            <person name="Vo N."/>
            <person name="Wagner M."/>
            <person name="Wheeler J."/>
            <person name="Wu K."/>
            <person name="Xie G."/>
            <person name="Yang J."/>
            <person name="Dubchak I."/>
            <person name="Furey T.S."/>
            <person name="DeJong P."/>
            <person name="Dickson M."/>
            <person name="Gordon D."/>
            <person name="Eichler E.E."/>
            <person name="Pennacchio L.A."/>
            <person name="Richardson P."/>
            <person name="Stubbs L."/>
            <person name="Rokhsar D.S."/>
            <person name="Myers R.M."/>
            <person name="Rubin E.M."/>
            <person name="Lucas S.M."/>
        </authorList>
    </citation>
    <scope>NUCLEOTIDE SEQUENCE [LARGE SCALE GENOMIC DNA]</scope>
</reference>
<reference key="4">
    <citation type="submission" date="2005-09" db="EMBL/GenBank/DDBJ databases">
        <authorList>
            <person name="Mural R.J."/>
            <person name="Istrail S."/>
            <person name="Sutton G.G."/>
            <person name="Florea L."/>
            <person name="Halpern A.L."/>
            <person name="Mobarry C.M."/>
            <person name="Lippert R."/>
            <person name="Walenz B."/>
            <person name="Shatkay H."/>
            <person name="Dew I."/>
            <person name="Miller J.R."/>
            <person name="Flanigan M.J."/>
            <person name="Edwards N.J."/>
            <person name="Bolanos R."/>
            <person name="Fasulo D."/>
            <person name="Halldorsson B.V."/>
            <person name="Hannenhalli S."/>
            <person name="Turner R."/>
            <person name="Yooseph S."/>
            <person name="Lu F."/>
            <person name="Nusskern D.R."/>
            <person name="Shue B.C."/>
            <person name="Zheng X.H."/>
            <person name="Zhong F."/>
            <person name="Delcher A.L."/>
            <person name="Huson D.H."/>
            <person name="Kravitz S.A."/>
            <person name="Mouchard L."/>
            <person name="Reinert K."/>
            <person name="Remington K.A."/>
            <person name="Clark A.G."/>
            <person name="Waterman M.S."/>
            <person name="Eichler E.E."/>
            <person name="Adams M.D."/>
            <person name="Hunkapiller M.W."/>
            <person name="Myers E.W."/>
            <person name="Venter J.C."/>
        </authorList>
    </citation>
    <scope>NUCLEOTIDE SEQUENCE [LARGE SCALE GENOMIC DNA]</scope>
</reference>
<reference key="5">
    <citation type="journal article" date="2004" name="Genome Res.">
        <title>The status, quality, and expansion of the NIH full-length cDNA project: the Mammalian Gene Collection (MGC).</title>
        <authorList>
            <consortium name="The MGC Project Team"/>
        </authorList>
    </citation>
    <scope>NUCLEOTIDE SEQUENCE [LARGE SCALE MRNA] (ISOFORM 2)</scope>
    <scope>NUCLEOTIDE SEQUENCE [LARGE SCALE MRNA] OF 43-1375 (ISOFORM 3)</scope>
    <scope>VARIANTS PRO-412 AND ARG-1033</scope>
    <source>
        <tissue>Brain</tissue>
        <tissue>Duodenum</tissue>
        <tissue>Testis</tissue>
    </source>
</reference>
<reference key="6">
    <citation type="journal article" date="2007" name="BMC Genomics">
        <title>The full-ORF clone resource of the German cDNA consortium.</title>
        <authorList>
            <person name="Bechtel S."/>
            <person name="Rosenfelder H."/>
            <person name="Duda A."/>
            <person name="Schmidt C.P."/>
            <person name="Ernst U."/>
            <person name="Wellenreuther R."/>
            <person name="Mehrle A."/>
            <person name="Schuster C."/>
            <person name="Bahr A."/>
            <person name="Bloecker H."/>
            <person name="Heubner D."/>
            <person name="Hoerlein A."/>
            <person name="Michel G."/>
            <person name="Wedler H."/>
            <person name="Koehrer K."/>
            <person name="Ottenwaelder B."/>
            <person name="Poustka A."/>
            <person name="Wiemann S."/>
            <person name="Schupp I."/>
        </authorList>
    </citation>
    <scope>NUCLEOTIDE SEQUENCE [LARGE SCALE MRNA] OF 994-1375 (ISOFORMS 2/3/4/5)</scope>
    <source>
        <tissue>Brain</tissue>
    </source>
</reference>
<reference key="7">
    <citation type="journal article" date="1991" name="Crit. Rev. Toxicol.">
        <title>The pathogenesis of organophosphate polyneuropathy.</title>
        <authorList>
            <person name="Lotti M."/>
        </authorList>
    </citation>
    <scope>REVIEW ON ACTIVITY REGULATION</scope>
</reference>
<reference key="8">
    <citation type="journal article" date="2002" name="J. Biol. Chem.">
        <title>Human neuropathy target esterase catalyzes hydrolysis of membrane lipids.</title>
        <authorList>
            <person name="van Tienhoven M."/>
            <person name="Atkins J."/>
            <person name="Li Y."/>
            <person name="Glynn P."/>
        </authorList>
    </citation>
    <scope>FUNCTION</scope>
    <scope>CATALYTIC ACTIVITY</scope>
    <scope>BIOPHYSICOCHEMICAL PROPERTIES</scope>
</reference>
<reference key="9">
    <citation type="journal article" date="2004" name="J. Biol. Chem.">
        <title>Neuropathy target esterase and its yeast homologue degrade phosphatidylcholine to glycerophosphocholine in living cells.</title>
        <authorList>
            <person name="Zaccheo O."/>
            <person name="Dinsdale D."/>
            <person name="Meacock P.A."/>
            <person name="Glynn P."/>
        </authorList>
    </citation>
    <scope>FUNCTION</scope>
    <scope>CATALYTIC ACTIVITY</scope>
    <scope>ACTIVITY REGULATION</scope>
    <scope>SUBCELLULAR LOCATION</scope>
</reference>
<reference key="10">
    <citation type="journal article" date="2008" name="Mol. Cell">
        <title>Kinase-selective enrichment enables quantitative phosphoproteomics of the kinome across the cell cycle.</title>
        <authorList>
            <person name="Daub H."/>
            <person name="Olsen J.V."/>
            <person name="Bairlein M."/>
            <person name="Gnad F."/>
            <person name="Oppermann F.S."/>
            <person name="Korner R."/>
            <person name="Greff Z."/>
            <person name="Keri G."/>
            <person name="Stemmann O."/>
            <person name="Mann M."/>
        </authorList>
    </citation>
    <scope>PHOSPHORYLATION [LARGE SCALE ANALYSIS] AT SER-354</scope>
    <scope>IDENTIFICATION BY MASS SPECTROMETRY [LARGE SCALE ANALYSIS]</scope>
    <source>
        <tissue>Cervix carcinoma</tissue>
    </source>
</reference>
<reference key="11">
    <citation type="journal article" date="2008" name="Proc. Natl. Acad. Sci. U.S.A.">
        <title>A quantitative atlas of mitotic phosphorylation.</title>
        <authorList>
            <person name="Dephoure N."/>
            <person name="Zhou C."/>
            <person name="Villen J."/>
            <person name="Beausoleil S.A."/>
            <person name="Bakalarski C.E."/>
            <person name="Elledge S.J."/>
            <person name="Gygi S.P."/>
        </authorList>
    </citation>
    <scope>PHOSPHORYLATION [LARGE SCALE ANALYSIS] AT SER-354; THR-361 AND SER-362</scope>
    <scope>IDENTIFICATION BY MASS SPECTROMETRY [LARGE SCALE ANALYSIS]</scope>
    <source>
        <tissue>Cervix carcinoma</tissue>
    </source>
</reference>
<reference key="12">
    <citation type="journal article" date="2010" name="Sci. Signal.">
        <title>Quantitative phosphoproteomics reveals widespread full phosphorylation site occupancy during mitosis.</title>
        <authorList>
            <person name="Olsen J.V."/>
            <person name="Vermeulen M."/>
            <person name="Santamaria A."/>
            <person name="Kumar C."/>
            <person name="Miller M.L."/>
            <person name="Jensen L.J."/>
            <person name="Gnad F."/>
            <person name="Cox J."/>
            <person name="Jensen T.S."/>
            <person name="Nigg E.A."/>
            <person name="Brunak S."/>
            <person name="Mann M."/>
        </authorList>
    </citation>
    <scope>PHOSPHORYLATION [LARGE SCALE ANALYSIS] AT SER-354</scope>
    <scope>IDENTIFICATION BY MASS SPECTROMETRY [LARGE SCALE ANALYSIS]</scope>
    <source>
        <tissue>Cervix carcinoma</tissue>
    </source>
</reference>
<reference key="13">
    <citation type="journal article" date="2011" name="BMC Syst. Biol.">
        <title>Initial characterization of the human central proteome.</title>
        <authorList>
            <person name="Burkard T.R."/>
            <person name="Planyavsky M."/>
            <person name="Kaupe I."/>
            <person name="Breitwieser F.P."/>
            <person name="Buerckstuemmer T."/>
            <person name="Bennett K.L."/>
            <person name="Superti-Furga G."/>
            <person name="Colinge J."/>
        </authorList>
    </citation>
    <scope>IDENTIFICATION BY MASS SPECTROMETRY [LARGE SCALE ANALYSIS]</scope>
</reference>
<reference key="14">
    <citation type="journal article" date="2013" name="J. Proteome Res.">
        <title>Toward a comprehensive characterization of a human cancer cell phosphoproteome.</title>
        <authorList>
            <person name="Zhou H."/>
            <person name="Di Palma S."/>
            <person name="Preisinger C."/>
            <person name="Peng M."/>
            <person name="Polat A.N."/>
            <person name="Heck A.J."/>
            <person name="Mohammed S."/>
        </authorList>
    </citation>
    <scope>PHOSPHORYLATION [LARGE SCALE ANALYSIS] AT SER-354; SER-362; SER-372 AND SER-420</scope>
    <scope>IDENTIFICATION BY MASS SPECTROMETRY [LARGE SCALE ANALYSIS]</scope>
    <source>
        <tissue>Cervix carcinoma</tissue>
        <tissue>Erythroleukemia</tissue>
    </source>
</reference>
<reference key="15">
    <citation type="journal article" date="2014" name="J. Clin. Endocrinol. Metab.">
        <title>Loss-of-function mutations in PNPLA6 encoding neuropathy target esterase underlie pubertal failure and neurological deficits in Gordon Holmes syndrome.</title>
        <authorList>
            <person name="Topaloglu A.K."/>
            <person name="Lomniczi A."/>
            <person name="Kretzschmar D."/>
            <person name="Dissen G.A."/>
            <person name="Kotan L.D."/>
            <person name="McArdle C.A."/>
            <person name="Koc A.F."/>
            <person name="Hamel B.C."/>
            <person name="Guclu M."/>
            <person name="Papatya E.D."/>
            <person name="Eren E."/>
            <person name="Mengen E."/>
            <person name="Gurbuz F."/>
            <person name="Cook M."/>
            <person name="Castellano J.M."/>
            <person name="Kekil M.B."/>
            <person name="Mungan N.O."/>
            <person name="Yuksel B."/>
            <person name="Ojeda S.R."/>
        </authorList>
    </citation>
    <scope>INVOLVEMENT IN BNHS</scope>
    <scope>VARIANTS BNHS CYS-1147; CYS-1175 AND TRP-1359</scope>
</reference>
<reference key="16">
    <citation type="journal article" date="2008" name="Am. J. Hum. Genet.">
        <title>Neuropathy target esterase gene mutations cause motor neuron disease.</title>
        <authorList>
            <person name="Rainier S."/>
            <person name="Bui M."/>
            <person name="Mark E."/>
            <person name="Thomas D."/>
            <person name="Tokarz D."/>
            <person name="Ming L."/>
            <person name="Delaney C."/>
            <person name="Richardson R.J."/>
            <person name="Albers J.W."/>
            <person name="Matsunami N."/>
            <person name="Stevens J."/>
            <person name="Coon H."/>
            <person name="Leppert M."/>
            <person name="Fink J.K."/>
        </authorList>
    </citation>
    <scope>INVOLVEMENT IN SPG39</scope>
    <scope>VARIANTS SPG39 HIS-938 AND VAL-1060</scope>
</reference>
<reference key="17">
    <citation type="journal article" date="2014" name="J. Proteomics">
        <title>An enzyme assisted RP-RPLC approach for in-depth analysis of human liver phosphoproteome.</title>
        <authorList>
            <person name="Bian Y."/>
            <person name="Song C."/>
            <person name="Cheng K."/>
            <person name="Dong M."/>
            <person name="Wang F."/>
            <person name="Huang J."/>
            <person name="Sun D."/>
            <person name="Wang L."/>
            <person name="Ye M."/>
            <person name="Zou H."/>
        </authorList>
    </citation>
    <scope>PHOSPHORYLATION [LARGE SCALE ANALYSIS] AT SER-420 AND THR-464</scope>
    <scope>IDENTIFICATION BY MASS SPECTROMETRY [LARGE SCALE ANALYSIS]</scope>
    <source>
        <tissue>Liver</tissue>
    </source>
</reference>
<reference key="18">
    <citation type="journal article" date="2015" name="J. Med. Genet.">
        <title>Neuropathy target esterase impairments cause Oliver-McFarlane and Laurence-Moon syndromes.</title>
        <authorList>
            <person name="Hufnagel R.B."/>
            <person name="Arno G."/>
            <person name="Hein N.D."/>
            <person name="Hersheson J."/>
            <person name="Prasad M."/>
            <person name="Anderson Y."/>
            <person name="Krueger L.A."/>
            <person name="Gregory L.C."/>
            <person name="Stoetzel C."/>
            <person name="Jaworek T.J."/>
            <person name="Hull S."/>
            <person name="Li A."/>
            <person name="Plagnol V."/>
            <person name="Willen C.M."/>
            <person name="Morgan T.M."/>
            <person name="Prows C.A."/>
            <person name="Hegde R.S."/>
            <person name="Riazuddin S."/>
            <person name="Grabowski G.A."/>
            <person name="Richardson R.J."/>
            <person name="Dieterich K."/>
            <person name="Huang T."/>
            <person name="Revesz T."/>
            <person name="Martinez-Barbera J.P."/>
            <person name="Sisk R.A."/>
            <person name="Jefferies C."/>
            <person name="Houlden H."/>
            <person name="Dattani M.T."/>
            <person name="Fink J.K."/>
            <person name="Dollfus H."/>
            <person name="Moore A.T."/>
            <person name="Ahmed Z.M."/>
        </authorList>
    </citation>
    <scope>TISSUE SPECIFICITY</scope>
    <scope>INVOLVEMENT IN LNMS</scope>
    <scope>INVOLVEMENT IN OMCS</scope>
    <scope>VARIANT LNMS ARG-726</scope>
    <scope>VARIANTS OMCS GLN-1099; ARG-1129; SER-1176 AND ALA-1215</scope>
</reference>
<reference key="19">
    <citation type="journal article" date="2014" name="Brain">
        <title>PNPLA6 mutations cause Boucher-Neuhauser and Gordon Holmes syndromes as part of a broad neurodegenerative spectrum.</title>
        <authorList>
            <person name="Synofzik M."/>
            <person name="Gonzalez M.A."/>
            <person name="Lourenco C.M."/>
            <person name="Coutelier M."/>
            <person name="Haack T.B."/>
            <person name="Rebelo A."/>
            <person name="Hannequin D."/>
            <person name="Strom T.M."/>
            <person name="Prokisch H."/>
            <person name="Kernstock C."/>
            <person name="Durr A."/>
            <person name="Schols L."/>
            <person name="Lima-Martinez M.M."/>
            <person name="Farooq A."/>
            <person name="Schule R."/>
            <person name="Stevanin G."/>
            <person name="Marques W. Jr."/>
            <person name="Zuchner S."/>
        </authorList>
    </citation>
    <scope>VARIANTS SPG39 ILE-263 AND GLU-840</scope>
    <scope>VARIANTS BNHS TRP-578; LEU-1045; ILE-1058; SER-1066; MET-1110 AND LEU-1122</scope>
    <scope>VARIANTS GLY-1100 AND GLY-1362</scope>
</reference>
<name>PLPL6_HUMAN</name>
<keyword id="KW-0025">Alternative splicing</keyword>
<keyword id="KW-0225">Disease variant</keyword>
<keyword id="KW-0242">Dwarfism</keyword>
<keyword id="KW-0256">Endoplasmic reticulum</keyword>
<keyword id="KW-0325">Glycoprotein</keyword>
<keyword id="KW-0890">Hereditary spastic paraplegia</keyword>
<keyword id="KW-0378">Hydrolase</keyword>
<keyword id="KW-1016">Hypogonadotropic hypogonadism</keyword>
<keyword id="KW-0991">Intellectual disability</keyword>
<keyword id="KW-0442">Lipid degradation</keyword>
<keyword id="KW-0443">Lipid metabolism</keyword>
<keyword id="KW-0472">Membrane</keyword>
<keyword id="KW-0523">Neurodegeneration</keyword>
<keyword id="KW-0597">Phosphoprotein</keyword>
<keyword id="KW-1267">Proteomics identification</keyword>
<keyword id="KW-1185">Reference proteome</keyword>
<keyword id="KW-0677">Repeat</keyword>
<keyword id="KW-0682">Retinitis pigmentosa</keyword>
<keyword id="KW-0812">Transmembrane</keyword>
<keyword id="KW-1133">Transmembrane helix</keyword>
<evidence type="ECO:0000250" key="1">
    <source>
        <dbReference type="UniProtKB" id="Q3TRM4"/>
    </source>
</evidence>
<evidence type="ECO:0000255" key="2"/>
<evidence type="ECO:0000255" key="3">
    <source>
        <dbReference type="PROSITE-ProRule" id="PRU01161"/>
    </source>
</evidence>
<evidence type="ECO:0000256" key="4">
    <source>
        <dbReference type="SAM" id="MobiDB-lite"/>
    </source>
</evidence>
<evidence type="ECO:0000269" key="5">
    <source>
    </source>
</evidence>
<evidence type="ECO:0000269" key="6">
    <source>
    </source>
</evidence>
<evidence type="ECO:0000269" key="7">
    <source>
    </source>
</evidence>
<evidence type="ECO:0000269" key="8">
    <source>
    </source>
</evidence>
<evidence type="ECO:0000269" key="9">
    <source>
    </source>
</evidence>
<evidence type="ECO:0000269" key="10">
    <source>
    </source>
</evidence>
<evidence type="ECO:0000269" key="11">
    <source>
    </source>
</evidence>
<evidence type="ECO:0000269" key="12">
    <source>
    </source>
</evidence>
<evidence type="ECO:0000269" key="13">
    <source>
    </source>
</evidence>
<evidence type="ECO:0000303" key="14">
    <source>
    </source>
</evidence>
<evidence type="ECO:0000303" key="15">
    <source>
    </source>
</evidence>
<evidence type="ECO:0000305" key="16"/>
<evidence type="ECO:0000305" key="17">
    <source>
    </source>
</evidence>
<evidence type="ECO:0000305" key="18">
    <source>
    </source>
</evidence>
<evidence type="ECO:0000312" key="19">
    <source>
        <dbReference type="HGNC" id="HGNC:16268"/>
    </source>
</evidence>
<evidence type="ECO:0007744" key="20">
    <source>
    </source>
</evidence>
<evidence type="ECO:0007744" key="21">
    <source>
    </source>
</evidence>
<evidence type="ECO:0007744" key="22">
    <source>
    </source>
</evidence>
<evidence type="ECO:0007744" key="23">
    <source>
    </source>
</evidence>
<evidence type="ECO:0007744" key="24">
    <source>
    </source>
</evidence>
<dbReference type="EC" id="3.1.1.5" evidence="7"/>
<dbReference type="EMBL" id="AJ004832">
    <property type="protein sequence ID" value="CAA06164.1"/>
    <property type="molecule type" value="mRNA"/>
</dbReference>
<dbReference type="EMBL" id="AK294021">
    <property type="protein sequence ID" value="BAG57380.1"/>
    <property type="molecule type" value="mRNA"/>
</dbReference>
<dbReference type="EMBL" id="AK302462">
    <property type="protein sequence ID" value="BAH13718.1"/>
    <property type="molecule type" value="mRNA"/>
</dbReference>
<dbReference type="EMBL" id="AC008878">
    <property type="status" value="NOT_ANNOTATED_CDS"/>
    <property type="molecule type" value="Genomic_DNA"/>
</dbReference>
<dbReference type="EMBL" id="AC009003">
    <property type="status" value="NOT_ANNOTATED_CDS"/>
    <property type="molecule type" value="Genomic_DNA"/>
</dbReference>
<dbReference type="EMBL" id="CH471139">
    <property type="protein sequence ID" value="EAW69029.1"/>
    <property type="molecule type" value="Genomic_DNA"/>
</dbReference>
<dbReference type="EMBL" id="BC038229">
    <property type="protein sequence ID" value="AAH38229.1"/>
    <property type="molecule type" value="mRNA"/>
</dbReference>
<dbReference type="EMBL" id="BC050553">
    <property type="protein sequence ID" value="AAH50553.1"/>
    <property type="molecule type" value="mRNA"/>
</dbReference>
<dbReference type="EMBL" id="BC051768">
    <property type="protein sequence ID" value="AAH51768.1"/>
    <property type="molecule type" value="mRNA"/>
</dbReference>
<dbReference type="EMBL" id="AL050362">
    <property type="protein sequence ID" value="CAB43674.1"/>
    <property type="molecule type" value="mRNA"/>
</dbReference>
<dbReference type="CCDS" id="CCDS32891.1">
    <molecule id="Q8IY17-2"/>
</dbReference>
<dbReference type="CCDS" id="CCDS54206.1">
    <molecule id="Q8IY17-4"/>
</dbReference>
<dbReference type="CCDS" id="CCDS54207.1">
    <molecule id="Q8IY17-5"/>
</dbReference>
<dbReference type="RefSeq" id="NP_001159583.1">
    <molecule id="Q8IY17-4"/>
    <property type="nucleotide sequence ID" value="NM_001166111.2"/>
</dbReference>
<dbReference type="RefSeq" id="NP_001159584.1">
    <molecule id="Q8IY17-5"/>
    <property type="nucleotide sequence ID" value="NM_001166112.2"/>
</dbReference>
<dbReference type="RefSeq" id="NP_001159585.1">
    <molecule id="Q8IY17-2"/>
    <property type="nucleotide sequence ID" value="NM_001166113.1"/>
</dbReference>
<dbReference type="RefSeq" id="NP_001159586.1">
    <property type="nucleotide sequence ID" value="NM_001166114.1"/>
</dbReference>
<dbReference type="RefSeq" id="NP_006693.3">
    <molecule id="Q8IY17-2"/>
    <property type="nucleotide sequence ID" value="NM_006702.4"/>
</dbReference>
<dbReference type="SMR" id="Q8IY17"/>
<dbReference type="BioGRID" id="116114">
    <property type="interactions" value="123"/>
</dbReference>
<dbReference type="FunCoup" id="Q8IY17">
    <property type="interactions" value="2049"/>
</dbReference>
<dbReference type="IntAct" id="Q8IY17">
    <property type="interactions" value="78"/>
</dbReference>
<dbReference type="MINT" id="Q8IY17"/>
<dbReference type="STRING" id="9606.ENSP00000407509"/>
<dbReference type="ChEMBL" id="CHEMBL2189129"/>
<dbReference type="SwissLipids" id="SLP:000000615"/>
<dbReference type="GlyCosmos" id="Q8IY17">
    <property type="glycosylation" value="2 sites, 1 glycan"/>
</dbReference>
<dbReference type="GlyGen" id="Q8IY17">
    <property type="glycosylation" value="4 sites, 1 N-linked glycan (1 site), 1 O-linked glycan (1 site)"/>
</dbReference>
<dbReference type="iPTMnet" id="Q8IY17"/>
<dbReference type="PhosphoSitePlus" id="Q8IY17"/>
<dbReference type="SwissPalm" id="Q8IY17"/>
<dbReference type="BioMuta" id="PNPLA6"/>
<dbReference type="DMDM" id="150403921"/>
<dbReference type="jPOST" id="Q8IY17"/>
<dbReference type="MassIVE" id="Q8IY17"/>
<dbReference type="PaxDb" id="9606-ENSP00000407509"/>
<dbReference type="PeptideAtlas" id="Q8IY17"/>
<dbReference type="ProteomicsDB" id="26908"/>
<dbReference type="ProteomicsDB" id="71085">
    <molecule id="Q8IY17-2"/>
</dbReference>
<dbReference type="ProteomicsDB" id="71086">
    <molecule id="Q8IY17-3"/>
</dbReference>
<dbReference type="Pumba" id="Q8IY17"/>
<dbReference type="Antibodypedia" id="2222">
    <property type="antibodies" value="240 antibodies from 30 providers"/>
</dbReference>
<dbReference type="DNASU" id="10908"/>
<dbReference type="Ensembl" id="ENST00000221249.10">
    <molecule id="Q8IY17-2"/>
    <property type="protein sequence ID" value="ENSP00000221249.5"/>
    <property type="gene ID" value="ENSG00000032444.17"/>
</dbReference>
<dbReference type="Ensembl" id="ENST00000414982.7">
    <molecule id="Q8IY17-4"/>
    <property type="protein sequence ID" value="ENSP00000407509.2"/>
    <property type="gene ID" value="ENSG00000032444.17"/>
</dbReference>
<dbReference type="Ensembl" id="ENST00000450331.7">
    <molecule id="Q8IY17-2"/>
    <property type="protein sequence ID" value="ENSP00000394348.2"/>
    <property type="gene ID" value="ENSG00000032444.17"/>
</dbReference>
<dbReference type="Ensembl" id="ENST00000545201.6">
    <molecule id="Q8IY17-5"/>
    <property type="protein sequence ID" value="ENSP00000443323.1"/>
    <property type="gene ID" value="ENSG00000032444.17"/>
</dbReference>
<dbReference type="GeneID" id="10908"/>
<dbReference type="KEGG" id="hsa:10908"/>
<dbReference type="UCSC" id="uc002mgq.3">
    <molecule id="Q8IY17-4"/>
    <property type="organism name" value="human"/>
</dbReference>
<dbReference type="AGR" id="HGNC:16268"/>
<dbReference type="CTD" id="10908"/>
<dbReference type="DisGeNET" id="10908"/>
<dbReference type="GeneCards" id="PNPLA6"/>
<dbReference type="GeneReviews" id="PNPLA6"/>
<dbReference type="HGNC" id="HGNC:16268">
    <property type="gene designation" value="PNPLA6"/>
</dbReference>
<dbReference type="HPA" id="ENSG00000032444">
    <property type="expression patterns" value="Low tissue specificity"/>
</dbReference>
<dbReference type="MalaCards" id="PNPLA6"/>
<dbReference type="MIM" id="215470">
    <property type="type" value="phenotype"/>
</dbReference>
<dbReference type="MIM" id="245800">
    <property type="type" value="phenotype"/>
</dbReference>
<dbReference type="MIM" id="275400">
    <property type="type" value="phenotype"/>
</dbReference>
<dbReference type="MIM" id="603197">
    <property type="type" value="gene"/>
</dbReference>
<dbReference type="MIM" id="612020">
    <property type="type" value="phenotype"/>
</dbReference>
<dbReference type="neXtProt" id="NX_Q8IY17"/>
<dbReference type="OpenTargets" id="ENSG00000032444"/>
<dbReference type="Orphanet" id="1180">
    <property type="disease" value="Ataxia-hypogonadism-choroidal dystrophy syndrome"/>
</dbReference>
<dbReference type="Orphanet" id="139480">
    <property type="disease" value="Autosomal recessive spastic paraplegia type 39"/>
</dbReference>
<dbReference type="Orphanet" id="1173">
    <property type="disease" value="Cerebellar ataxia-hypogonadism syndrome"/>
</dbReference>
<dbReference type="Orphanet" id="2377">
    <property type="disease" value="Laurence-Moon syndrome"/>
</dbReference>
<dbReference type="Orphanet" id="3363">
    <property type="disease" value="Trichomegaly-retina pigmentary degeneration-dwarfism syndrome"/>
</dbReference>
<dbReference type="PharmGKB" id="PA145148268"/>
<dbReference type="VEuPathDB" id="HostDB:ENSG00000032444"/>
<dbReference type="eggNOG" id="KOG2968">
    <property type="taxonomic scope" value="Eukaryota"/>
</dbReference>
<dbReference type="GeneTree" id="ENSGT00940000159130"/>
<dbReference type="HOGENOM" id="CLU_000960_1_0_1"/>
<dbReference type="InParanoid" id="Q8IY17"/>
<dbReference type="OMA" id="GQQEDRH"/>
<dbReference type="OrthoDB" id="421051at2759"/>
<dbReference type="PAN-GO" id="Q8IY17">
    <property type="GO annotations" value="2 GO annotations based on evolutionary models"/>
</dbReference>
<dbReference type="PhylomeDB" id="Q8IY17"/>
<dbReference type="TreeFam" id="TF300519"/>
<dbReference type="PathwayCommons" id="Q8IY17"/>
<dbReference type="Reactome" id="R-HSA-6814848">
    <property type="pathway name" value="Glycerophospholipid catabolism"/>
</dbReference>
<dbReference type="SignaLink" id="Q8IY17"/>
<dbReference type="SIGNOR" id="Q8IY17"/>
<dbReference type="BioGRID-ORCS" id="10908">
    <property type="hits" value="21 hits in 1158 CRISPR screens"/>
</dbReference>
<dbReference type="ChiTaRS" id="PNPLA6">
    <property type="organism name" value="human"/>
</dbReference>
<dbReference type="GeneWiki" id="Neuropathy_target_esterase"/>
<dbReference type="GenomeRNAi" id="10908"/>
<dbReference type="Pharos" id="Q8IY17">
    <property type="development level" value="Tbio"/>
</dbReference>
<dbReference type="PRO" id="PR:Q8IY17"/>
<dbReference type="Proteomes" id="UP000005640">
    <property type="component" value="Chromosome 19"/>
</dbReference>
<dbReference type="RNAct" id="Q8IY17">
    <property type="molecule type" value="protein"/>
</dbReference>
<dbReference type="Bgee" id="ENSG00000032444">
    <property type="expression patterns" value="Expressed in granulocyte and 188 other cell types or tissues"/>
</dbReference>
<dbReference type="ExpressionAtlas" id="Q8IY17">
    <property type="expression patterns" value="baseline and differential"/>
</dbReference>
<dbReference type="GO" id="GO:0005829">
    <property type="term" value="C:cytosol"/>
    <property type="evidence" value="ECO:0000314"/>
    <property type="project" value="HPA"/>
</dbReference>
<dbReference type="GO" id="GO:0005783">
    <property type="term" value="C:endoplasmic reticulum"/>
    <property type="evidence" value="ECO:0000314"/>
    <property type="project" value="HPA"/>
</dbReference>
<dbReference type="GO" id="GO:0005789">
    <property type="term" value="C:endoplasmic reticulum membrane"/>
    <property type="evidence" value="ECO:0000304"/>
    <property type="project" value="Reactome"/>
</dbReference>
<dbReference type="GO" id="GO:0016020">
    <property type="term" value="C:membrane"/>
    <property type="evidence" value="ECO:0007005"/>
    <property type="project" value="UniProtKB"/>
</dbReference>
<dbReference type="GO" id="GO:0004622">
    <property type="term" value="F:lysophospholipase activity"/>
    <property type="evidence" value="ECO:0000269"/>
    <property type="project" value="Reactome"/>
</dbReference>
<dbReference type="GO" id="GO:0046475">
    <property type="term" value="P:glycerophospholipid catabolic process"/>
    <property type="evidence" value="ECO:0000304"/>
    <property type="project" value="Reactome"/>
</dbReference>
<dbReference type="GO" id="GO:0046470">
    <property type="term" value="P:phosphatidylcholine metabolic process"/>
    <property type="evidence" value="ECO:0007669"/>
    <property type="project" value="InterPro"/>
</dbReference>
<dbReference type="CDD" id="cd00038">
    <property type="entry name" value="CAP_ED"/>
    <property type="match status" value="3"/>
</dbReference>
<dbReference type="CDD" id="cd07225">
    <property type="entry name" value="Pat_PNPLA6_PNPLA7"/>
    <property type="match status" value="1"/>
</dbReference>
<dbReference type="FunFam" id="2.60.120.10:FF:000010">
    <property type="entry name" value="neuropathy target esterase isoform X1"/>
    <property type="match status" value="1"/>
</dbReference>
<dbReference type="FunFam" id="2.60.120.10:FF:000012">
    <property type="entry name" value="neuropathy target esterase isoform X2"/>
    <property type="match status" value="1"/>
</dbReference>
<dbReference type="FunFam" id="3.40.1090.10:FF:000001">
    <property type="entry name" value="neuropathy target esterase isoform X2"/>
    <property type="match status" value="1"/>
</dbReference>
<dbReference type="FunFam" id="2.60.120.10:FF:000022">
    <property type="entry name" value="Patatin like phospholipase domain containing 7"/>
    <property type="match status" value="1"/>
</dbReference>
<dbReference type="Gene3D" id="3.40.1090.10">
    <property type="entry name" value="Cytosolic phospholipase A2 catalytic domain"/>
    <property type="match status" value="1"/>
</dbReference>
<dbReference type="Gene3D" id="2.60.120.10">
    <property type="entry name" value="Jelly Rolls"/>
    <property type="match status" value="3"/>
</dbReference>
<dbReference type="InterPro" id="IPR016035">
    <property type="entry name" value="Acyl_Trfase/lysoPLipase"/>
</dbReference>
<dbReference type="InterPro" id="IPR000595">
    <property type="entry name" value="cNMP-bd_dom"/>
</dbReference>
<dbReference type="InterPro" id="IPR018490">
    <property type="entry name" value="cNMP-bd_dom_sf"/>
</dbReference>
<dbReference type="InterPro" id="IPR001423">
    <property type="entry name" value="LysoPLipase_patatin_CS"/>
</dbReference>
<dbReference type="InterPro" id="IPR050301">
    <property type="entry name" value="NTE"/>
</dbReference>
<dbReference type="InterPro" id="IPR056556">
    <property type="entry name" value="NTE1_P-loop_dom"/>
</dbReference>
<dbReference type="InterPro" id="IPR002641">
    <property type="entry name" value="PNPLA_dom"/>
</dbReference>
<dbReference type="InterPro" id="IPR014710">
    <property type="entry name" value="RmlC-like_jellyroll"/>
</dbReference>
<dbReference type="PANTHER" id="PTHR14226">
    <property type="entry name" value="NEUROPATHY TARGET ESTERASE/SWISS CHEESE D.MELANOGASTER"/>
    <property type="match status" value="1"/>
</dbReference>
<dbReference type="PANTHER" id="PTHR14226:SF26">
    <property type="entry name" value="PATATIN-LIKE PHOSPHOLIPASE DOMAIN-CONTAINING PROTEIN 6"/>
    <property type="match status" value="1"/>
</dbReference>
<dbReference type="Pfam" id="PF00027">
    <property type="entry name" value="cNMP_binding"/>
    <property type="match status" value="3"/>
</dbReference>
<dbReference type="Pfam" id="PF24179">
    <property type="entry name" value="NTE_Ploop"/>
    <property type="match status" value="1"/>
</dbReference>
<dbReference type="Pfam" id="PF01734">
    <property type="entry name" value="Patatin"/>
    <property type="match status" value="1"/>
</dbReference>
<dbReference type="SMART" id="SM00100">
    <property type="entry name" value="cNMP"/>
    <property type="match status" value="3"/>
</dbReference>
<dbReference type="SUPFAM" id="SSF51206">
    <property type="entry name" value="cAMP-binding domain-like"/>
    <property type="match status" value="3"/>
</dbReference>
<dbReference type="SUPFAM" id="SSF52151">
    <property type="entry name" value="FabD/lysophospholipase-like"/>
    <property type="match status" value="1"/>
</dbReference>
<dbReference type="PROSITE" id="PS50042">
    <property type="entry name" value="CNMP_BINDING_3"/>
    <property type="match status" value="3"/>
</dbReference>
<dbReference type="PROSITE" id="PS51635">
    <property type="entry name" value="PNPLA"/>
    <property type="match status" value="1"/>
</dbReference>
<dbReference type="PROSITE" id="PS01237">
    <property type="entry name" value="UPF0028"/>
    <property type="match status" value="1"/>
</dbReference>
<feature type="chain" id="PRO_0000292199" description="Patatin-like phospholipase domain-containing protein 6">
    <location>
        <begin position="1"/>
        <end position="1375"/>
    </location>
</feature>
<feature type="topological domain" description="Lumenal" evidence="2">
    <location>
        <begin position="1"/>
        <end position="59"/>
    </location>
</feature>
<feature type="transmembrane region" description="Helical" evidence="2">
    <location>
        <begin position="60"/>
        <end position="80"/>
    </location>
</feature>
<feature type="topological domain" description="Cytoplasmic" evidence="2">
    <location>
        <begin position="81"/>
        <end position="1375"/>
    </location>
</feature>
<feature type="domain" description="PNPLA" evidence="3">
    <location>
        <begin position="981"/>
        <end position="1147"/>
    </location>
</feature>
<feature type="region of interest" description="Disordered" evidence="4">
    <location>
        <begin position="1"/>
        <end position="20"/>
    </location>
</feature>
<feature type="region of interest" description="Disordered" evidence="4">
    <location>
        <begin position="352"/>
        <end position="436"/>
    </location>
</feature>
<feature type="region of interest" description="Disordered" evidence="4">
    <location>
        <begin position="449"/>
        <end position="472"/>
    </location>
</feature>
<feature type="region of interest" description="Disordered" evidence="4">
    <location>
        <begin position="1306"/>
        <end position="1375"/>
    </location>
</feature>
<feature type="short sequence motif" description="GXGXXG" evidence="3">
    <location>
        <begin position="985"/>
        <end position="990"/>
    </location>
</feature>
<feature type="short sequence motif" description="GXSXG" evidence="3">
    <location>
        <begin position="1012"/>
        <end position="1016"/>
    </location>
</feature>
<feature type="short sequence motif" description="DGA/G" evidence="3">
    <location>
        <begin position="1134"/>
        <end position="1136"/>
    </location>
</feature>
<feature type="compositionally biased region" description="Polar residues" evidence="4">
    <location>
        <begin position="9"/>
        <end position="20"/>
    </location>
</feature>
<feature type="compositionally biased region" description="Polar residues" evidence="4">
    <location>
        <begin position="359"/>
        <end position="376"/>
    </location>
</feature>
<feature type="compositionally biased region" description="Pro residues" evidence="4">
    <location>
        <begin position="384"/>
        <end position="398"/>
    </location>
</feature>
<feature type="compositionally biased region" description="Acidic residues" evidence="4">
    <location>
        <begin position="1313"/>
        <end position="1329"/>
    </location>
</feature>
<feature type="active site" description="Nucleophile" evidence="3">
    <location>
        <position position="1014"/>
    </location>
</feature>
<feature type="active site" description="Proton acceptor" evidence="3">
    <location>
        <position position="1134"/>
    </location>
</feature>
<feature type="binding site">
    <location>
        <begin position="195"/>
        <end position="322"/>
    </location>
    <ligand>
        <name>a nucleoside 3',5'-cyclic phosphate</name>
        <dbReference type="ChEBI" id="CHEBI:58464"/>
        <label>1</label>
    </ligand>
</feature>
<feature type="binding site">
    <location>
        <begin position="511"/>
        <end position="633"/>
    </location>
    <ligand>
        <name>a nucleoside 3',5'-cyclic phosphate</name>
        <dbReference type="ChEBI" id="CHEBI:58464"/>
        <label>2</label>
    </ligand>
</feature>
<feature type="binding site">
    <location>
        <begin position="629"/>
        <end position="749"/>
    </location>
    <ligand>
        <name>a nucleoside 3',5'-cyclic phosphate</name>
        <dbReference type="ChEBI" id="CHEBI:58464"/>
        <label>3</label>
    </ligand>
</feature>
<feature type="modified residue" description="Phosphoserine" evidence="20 21 22 23">
    <location>
        <position position="354"/>
    </location>
</feature>
<feature type="modified residue" description="Phosphothreonine" evidence="20">
    <location>
        <position position="361"/>
    </location>
</feature>
<feature type="modified residue" description="Phosphoserine" evidence="20 23">
    <location>
        <position position="362"/>
    </location>
</feature>
<feature type="modified residue" description="Phosphoserine" evidence="23">
    <location>
        <position position="372"/>
    </location>
</feature>
<feature type="modified residue" description="Phosphoserine" evidence="23 24">
    <location>
        <position position="420"/>
    </location>
</feature>
<feature type="modified residue" description="Phosphothreonine" evidence="24">
    <location>
        <position position="464"/>
    </location>
</feature>
<feature type="glycosylation site" description="N-linked (GlcNAc...) asparagine" evidence="2">
    <location>
        <position position="20"/>
    </location>
</feature>
<feature type="splice variant" id="VSP_059668" description="In isoform 2 and isoform 5.">
    <location>
        <begin position="10"/>
        <end position="57"/>
    </location>
</feature>
<feature type="splice variant" id="VSP_059669" description="In isoform 5.">
    <location>
        <begin position="521"/>
        <end position="546"/>
    </location>
</feature>
<feature type="splice variant" id="VSP_059670" description="In isoform 3 and isoform 5.">
    <location>
        <position position="763"/>
    </location>
</feature>
<feature type="sequence variant" id="VAR_071091" description="In SPG39; dbSNP:rs587777184." evidence="10">
    <original>V</original>
    <variation>I</variation>
    <location>
        <position position="263"/>
    </location>
</feature>
<feature type="sequence variant" id="VAR_032949" description="In dbSNP:rs17854645." evidence="6 8">
    <original>A</original>
    <variation>P</variation>
    <location>
        <position position="412"/>
    </location>
</feature>
<feature type="sequence variant" id="VAR_071092" description="In BNHS; dbSNP:rs587777615." evidence="10">
    <original>G</original>
    <variation>W</variation>
    <location>
        <position position="578"/>
    </location>
</feature>
<feature type="sequence variant" id="VAR_073409" description="In LNMS." evidence="12">
    <original>G</original>
    <variation>R</variation>
    <location>
        <position position="726"/>
    </location>
</feature>
<feature type="sequence variant" id="VAR_071093" description="In SPG39; dbSNP:rs587777185." evidence="10">
    <original>G</original>
    <variation>E</variation>
    <location>
        <position position="840"/>
    </location>
</feature>
<feature type="sequence variant" id="VAR_044409" description="In SPG39; dbSNP:rs121434416." evidence="9">
    <original>R</original>
    <variation>H</variation>
    <location>
        <position position="938"/>
    </location>
</feature>
<feature type="sequence variant" id="VAR_032950" description="In dbSNP:rs17854647." evidence="8">
    <original>K</original>
    <variation>R</variation>
    <location>
        <position position="1033"/>
    </location>
</feature>
<feature type="sequence variant" id="VAR_071094" description="In BNHS; dbSNP:rs541098659." evidence="10">
    <original>S</original>
    <variation>L</variation>
    <location>
        <position position="1045"/>
    </location>
</feature>
<feature type="sequence variant" id="VAR_071095" description="In BNHS; dbSNP:rs587777181." evidence="10">
    <original>T</original>
    <variation>I</variation>
    <location>
        <position position="1058"/>
    </location>
</feature>
<feature type="sequence variant" id="VAR_044410" description="In SPG39; dbSNP:rs121434415." evidence="9">
    <original>M</original>
    <variation>V</variation>
    <location>
        <position position="1060"/>
    </location>
</feature>
<feature type="sequence variant" id="VAR_071096" description="In BNHS; dbSNP:rs587777183." evidence="10">
    <original>F</original>
    <variation>S</variation>
    <location>
        <position position="1066"/>
    </location>
</feature>
<feature type="sequence variant" id="VAR_073410" description="In OMCS; dbSNP:rs786201037." evidence="12">
    <original>R</original>
    <variation>Q</variation>
    <location>
        <position position="1099"/>
    </location>
</feature>
<feature type="sequence variant" id="VAR_071097" description="Found in a patient with sporadic ataxia and BNHS; uncertain significance; dbSNP:rs754429587." evidence="10">
    <original>V</original>
    <variation>G</variation>
    <location>
        <position position="1100"/>
    </location>
</feature>
<feature type="sequence variant" id="VAR_071098" description="In BNHS; dbSNP:rs587777182." evidence="10">
    <original>V</original>
    <variation>M</variation>
    <location>
        <position position="1110"/>
    </location>
</feature>
<feature type="sequence variant" id="VAR_071099" description="In BNHS; dbSNP:rs748506175." evidence="10">
    <original>P</original>
    <variation>L</variation>
    <location>
        <position position="1122"/>
    </location>
</feature>
<feature type="sequence variant" id="VAR_073411" description="In OMCS; dbSNP:rs773955314." evidence="12">
    <original>G</original>
    <variation>R</variation>
    <location>
        <position position="1129"/>
    </location>
</feature>
<feature type="sequence variant" id="VAR_073412" description="In BNHS; dbSNP:rs587777854." evidence="11">
    <original>R</original>
    <variation>C</variation>
    <location>
        <position position="1147"/>
    </location>
</feature>
<feature type="sequence variant" id="VAR_073413" description="In BNHS; dbSNP:rs1555751592." evidence="11">
    <original>S</original>
    <variation>C</variation>
    <location>
        <position position="1175"/>
    </location>
</feature>
<feature type="sequence variant" id="VAR_073414" description="In OMCS; dbSNP:rs142422525." evidence="12">
    <original>G</original>
    <variation>S</variation>
    <location>
        <position position="1176"/>
    </location>
</feature>
<feature type="sequence variant" id="VAR_073415" description="In OMCS; dbSNP:rs1211079280." evidence="12">
    <original>V</original>
    <variation>A</variation>
    <location>
        <position position="1215"/>
    </location>
</feature>
<feature type="sequence variant" id="VAR_073416" description="In BNHS; dbSNP:rs374434303." evidence="11">
    <original>R</original>
    <variation>W</variation>
    <location>
        <position position="1359"/>
    </location>
</feature>
<feature type="sequence variant" id="VAR_071100" description="Found in a patient with Gordon-Holmes syndrome; uncertain significance; dbSNP:rs1204274988." evidence="10">
    <original>R</original>
    <variation>G</variation>
    <location>
        <position position="1362"/>
    </location>
</feature>
<feature type="sequence conflict" description="In Ref. 5; AAH38229." evidence="16" ref="5">
    <original>AGRI</original>
    <variation>TRPV</variation>
    <location>
        <begin position="43"/>
        <end position="46"/>
    </location>
</feature>
<feature type="sequence conflict" description="In Ref. 2; BAG57380." evidence="16" ref="2">
    <original>T</original>
    <variation>A</variation>
    <location>
        <position position="648"/>
    </location>
</feature>
<feature type="sequence conflict" description="In Ref. 5; AAH38229." evidence="16" ref="5">
    <original>A</original>
    <variation>T</variation>
    <location>
        <position position="714"/>
    </location>
</feature>
<feature type="sequence conflict" description="In Ref. 6; CAB43674." evidence="16" ref="6">
    <original>I</original>
    <variation>W</variation>
    <location>
        <position position="994"/>
    </location>
</feature>
<feature type="sequence conflict" description="In Ref. 6; CAB43674." evidence="16" ref="6">
    <original>W</original>
    <variation>V</variation>
    <location>
        <position position="1178"/>
    </location>
</feature>
<feature type="sequence conflict" description="In Ref. 6; CAB43674." evidence="16" ref="6">
    <original>E</original>
    <variation>G</variation>
    <location>
        <position position="1296"/>
    </location>
</feature>
<feature type="sequence conflict" description="In Ref. 2; BAH13718." evidence="16" ref="2">
    <original>E</original>
    <variation>K</variation>
    <location>
        <position position="1302"/>
    </location>
</feature>
<organism>
    <name type="scientific">Homo sapiens</name>
    <name type="common">Human</name>
    <dbReference type="NCBI Taxonomy" id="9606"/>
    <lineage>
        <taxon>Eukaryota</taxon>
        <taxon>Metazoa</taxon>
        <taxon>Chordata</taxon>
        <taxon>Craniata</taxon>
        <taxon>Vertebrata</taxon>
        <taxon>Euteleostomi</taxon>
        <taxon>Mammalia</taxon>
        <taxon>Eutheria</taxon>
        <taxon>Euarchontoglires</taxon>
        <taxon>Primates</taxon>
        <taxon>Haplorrhini</taxon>
        <taxon>Catarrhini</taxon>
        <taxon>Hominidae</taxon>
        <taxon>Homo</taxon>
    </lineage>
</organism>
<protein>
    <recommendedName>
        <fullName evidence="16">Patatin-like phospholipase domain-containing protein 6</fullName>
        <ecNumber evidence="7">3.1.1.5</ecNumber>
    </recommendedName>
    <alternativeName>
        <fullName evidence="15">Neuropathy target esterase</fullName>
    </alternativeName>
</protein>
<proteinExistence type="evidence at protein level"/>
<comment type="function">
    <text evidence="5 7">Phospholipase B that deacylates intracellular phosphatidylcholine (PtdCho), generating glycerophosphocholine (GroPtdCho). This deacylation occurs at both sn-2 and sn-1 positions of PtdCho. Catalyzes the hydrolysis of several naturally occurring membrane-associated lipids (PubMed:11927584). Hydrolyzes lysophospholipids and monoacylglycerols, preferring the 1-acyl to the 2-acyl isomer. Does not catalyze hydrolysis of di- or triacylglycerols or fatty acid amides (PubMed:11927584).</text>
</comment>
<comment type="catalytic activity">
    <reaction evidence="7">
        <text>a 1-acyl-sn-glycero-3-phosphocholine + H2O = sn-glycerol 3-phosphocholine + a fatty acid + H(+)</text>
        <dbReference type="Rhea" id="RHEA:15177"/>
        <dbReference type="ChEBI" id="CHEBI:15377"/>
        <dbReference type="ChEBI" id="CHEBI:15378"/>
        <dbReference type="ChEBI" id="CHEBI:16870"/>
        <dbReference type="ChEBI" id="CHEBI:28868"/>
        <dbReference type="ChEBI" id="CHEBI:58168"/>
        <dbReference type="EC" id="3.1.1.5"/>
    </reaction>
    <physiologicalReaction direction="left-to-right" evidence="7">
        <dbReference type="Rhea" id="RHEA:15178"/>
    </physiologicalReaction>
</comment>
<comment type="catalytic activity">
    <reaction evidence="5">
        <text>1-(9Z-octadecenoyl)-sn-glycero-3-phosphocholine + H2O = sn-glycerol 3-phosphocholine + (9Z)-octadecenoate + H(+)</text>
        <dbReference type="Rhea" id="RHEA:40807"/>
        <dbReference type="ChEBI" id="CHEBI:15377"/>
        <dbReference type="ChEBI" id="CHEBI:15378"/>
        <dbReference type="ChEBI" id="CHEBI:16870"/>
        <dbReference type="ChEBI" id="CHEBI:28610"/>
        <dbReference type="ChEBI" id="CHEBI:30823"/>
    </reaction>
    <physiologicalReaction direction="left-to-right" evidence="17">
        <dbReference type="Rhea" id="RHEA:40808"/>
    </physiologicalReaction>
</comment>
<comment type="catalytic activity">
    <reaction evidence="5">
        <text>1-hexadecanoylglycerol + H2O = glycerol + hexadecanoate + H(+)</text>
        <dbReference type="Rhea" id="RHEA:39959"/>
        <dbReference type="ChEBI" id="CHEBI:7896"/>
        <dbReference type="ChEBI" id="CHEBI:15377"/>
        <dbReference type="ChEBI" id="CHEBI:15378"/>
        <dbReference type="ChEBI" id="CHEBI:17754"/>
        <dbReference type="ChEBI" id="CHEBI:69081"/>
    </reaction>
    <physiologicalReaction direction="left-to-right" evidence="17">
        <dbReference type="Rhea" id="RHEA:39960"/>
    </physiologicalReaction>
</comment>
<comment type="catalytic activity">
    <reaction evidence="5">
        <text>2-hexadecanoylglycerol + H2O = glycerol + hexadecanoate + H(+)</text>
        <dbReference type="Rhea" id="RHEA:39963"/>
        <dbReference type="ChEBI" id="CHEBI:7896"/>
        <dbReference type="ChEBI" id="CHEBI:15377"/>
        <dbReference type="ChEBI" id="CHEBI:15378"/>
        <dbReference type="ChEBI" id="CHEBI:17754"/>
        <dbReference type="ChEBI" id="CHEBI:75455"/>
    </reaction>
    <physiologicalReaction direction="left-to-right" evidence="17">
        <dbReference type="Rhea" id="RHEA:39964"/>
    </physiologicalReaction>
</comment>
<comment type="catalytic activity">
    <reaction evidence="5">
        <text>1-(9Z-octadecenoyl)-glycerol + H2O = glycerol + (9Z)-octadecenoate + H(+)</text>
        <dbReference type="Rhea" id="RHEA:38487"/>
        <dbReference type="ChEBI" id="CHEBI:15377"/>
        <dbReference type="ChEBI" id="CHEBI:15378"/>
        <dbReference type="ChEBI" id="CHEBI:17754"/>
        <dbReference type="ChEBI" id="CHEBI:30823"/>
        <dbReference type="ChEBI" id="CHEBI:75342"/>
    </reaction>
    <physiologicalReaction direction="left-to-right" evidence="17">
        <dbReference type="Rhea" id="RHEA:38488"/>
    </physiologicalReaction>
</comment>
<comment type="catalytic activity">
    <reaction evidence="5">
        <text>2-(9Z-octadecenoyl)-glycerol + H2O = glycerol + (9Z)-octadecenoate + H(+)</text>
        <dbReference type="Rhea" id="RHEA:38491"/>
        <dbReference type="ChEBI" id="CHEBI:15377"/>
        <dbReference type="ChEBI" id="CHEBI:15378"/>
        <dbReference type="ChEBI" id="CHEBI:17754"/>
        <dbReference type="ChEBI" id="CHEBI:30823"/>
        <dbReference type="ChEBI" id="CHEBI:73990"/>
    </reaction>
    <physiologicalReaction direction="left-to-right" evidence="17">
        <dbReference type="Rhea" id="RHEA:38492"/>
    </physiologicalReaction>
</comment>
<comment type="catalytic activity">
    <reaction evidence="5">
        <text>2-(5Z,8Z,11Z,14Z-eicosatetraenoyl)-glycerol + H2O = glycerol + (5Z,8Z,11Z,14Z)-eicosatetraenoate + H(+)</text>
        <dbReference type="Rhea" id="RHEA:26132"/>
        <dbReference type="ChEBI" id="CHEBI:15377"/>
        <dbReference type="ChEBI" id="CHEBI:15378"/>
        <dbReference type="ChEBI" id="CHEBI:17754"/>
        <dbReference type="ChEBI" id="CHEBI:32395"/>
        <dbReference type="ChEBI" id="CHEBI:52392"/>
    </reaction>
    <physiologicalReaction direction="left-to-right" evidence="17">
        <dbReference type="Rhea" id="RHEA:26133"/>
    </physiologicalReaction>
</comment>
<comment type="catalytic activity">
    <reaction evidence="1">
        <text>1-hexadecanoyl-sn-glycero-3-phosphate + H2O = sn-glycerol 3-phosphate + hexadecanoate + H(+)</text>
        <dbReference type="Rhea" id="RHEA:49092"/>
        <dbReference type="ChEBI" id="CHEBI:7896"/>
        <dbReference type="ChEBI" id="CHEBI:15377"/>
        <dbReference type="ChEBI" id="CHEBI:15378"/>
        <dbReference type="ChEBI" id="CHEBI:57518"/>
        <dbReference type="ChEBI" id="CHEBI:57597"/>
    </reaction>
    <physiologicalReaction direction="left-to-right" evidence="1">
        <dbReference type="Rhea" id="RHEA:49093"/>
    </physiologicalReaction>
</comment>
<comment type="catalytic activity">
    <reaction evidence="5">
        <text>1-hexadecanoyl-sn-glycero-3-phosphocholine + H2O = sn-glycerol 3-phosphocholine + hexadecanoate + H(+)</text>
        <dbReference type="Rhea" id="RHEA:40435"/>
        <dbReference type="ChEBI" id="CHEBI:7896"/>
        <dbReference type="ChEBI" id="CHEBI:15377"/>
        <dbReference type="ChEBI" id="CHEBI:15378"/>
        <dbReference type="ChEBI" id="CHEBI:16870"/>
        <dbReference type="ChEBI" id="CHEBI:72998"/>
    </reaction>
    <physiologicalReaction direction="left-to-right" evidence="17">
        <dbReference type="Rhea" id="RHEA:40436"/>
    </physiologicalReaction>
</comment>
<comment type="activity regulation">
    <text evidence="7 18">Inhibited by a series a OPs such as mipafox (MPX), phenyl saligenin phosphate (PSP), phenyl dipentyl phosphinate (PDPP), diisopropyl fluorophosphate and paraoxon.</text>
</comment>
<comment type="biophysicochemical properties">
    <kinetics>
        <KM evidence="5">0.05 mM for 1-palmitoyl-lysophosphatidylcholine</KM>
        <KM evidence="5">0.4 mM for 1-palmitoylglycerol</KM>
        <Vmax evidence="5">20.0 umol/min/mg enzyme towards 1-palmitoyl-lysophosphatidylcholine</Vmax>
        <Vmax evidence="5">1.0 umol/min/mg enzyme towards 1-palmitoylglycerol</Vmax>
    </kinetics>
</comment>
<comment type="subcellular location">
    <subcellularLocation>
        <location evidence="7">Endoplasmic reticulum membrane</location>
        <topology evidence="7">Single-pass type III membrane protein</topology>
    </subcellularLocation>
</comment>
<comment type="alternative products">
    <event type="alternative splicing"/>
    <isoform>
        <id>Q8IY17-4</id>
        <name>4</name>
        <sequence type="displayed"/>
    </isoform>
    <isoform>
        <id>Q8IY17-2</id>
        <name>2</name>
        <sequence type="described" ref="VSP_059668"/>
    </isoform>
    <isoform>
        <id>Q8IY17-3</id>
        <name>3</name>
        <sequence type="described" ref="VSP_059670"/>
    </isoform>
    <isoform>
        <id>Q8IY17-5</id>
        <name>5</name>
        <sequence type="described" ref="VSP_059668 VSP_059669 VSP_059670"/>
    </isoform>
</comment>
<comment type="tissue specificity">
    <text evidence="12 13">Expressed in brain, placenta, kidney, neuron and skeletal muscle. Expressed in the developing eye, pituitary and brain.</text>
</comment>
<comment type="PTM">
    <text evidence="13">Glycosylated.</text>
</comment>
<comment type="disease" evidence="9 10">
    <disease id="DI-01049">
        <name>Spastic paraplegia 39, autosomal recessive</name>
        <acronym>SPG39</acronym>
        <description>A form of spastic paraplegia, a neurodegenerative disorder characterized by a slow, gradual, progressive weakness and spasticity of the lower limbs. Rate of progression and the severity of symptoms are quite variable. Initial symptoms may include difficulty with balance, weakness and stiffness in the legs, muscle spasms, and dragging the toes when walking. In some forms of the disorder, bladder symptoms (such as incontinence) may appear, or the weakness and stiffness may spread to other parts of the body. SPG39 is associated with a motor axonopathy affecting upper and lower limbs and resulting in progressive wasting of distal upper and lower extremity muscles.</description>
        <dbReference type="MIM" id="612020"/>
    </disease>
    <text>The disease is caused by variants affecting the gene represented in this entry.</text>
</comment>
<comment type="disease" evidence="10 11">
    <disease id="DI-04065">
        <name>Boucher-Neuhauser syndrome</name>
        <acronym>BNHS</acronym>
        <description>An autosomal recessive disorder characterized by spinocerebellar ataxia, hypogonadotropic hypogonadism, and visual impairment due to chorioretinal dystrophy. The age at onset is variable, but most patients develop 1 or more symptoms in the first decade of life. Chorioretinal dystrophy may not always be present.</description>
        <dbReference type="MIM" id="215470"/>
    </disease>
    <text>The disease is caused by variants affecting the gene represented in this entry.</text>
</comment>
<comment type="disease" evidence="12">
    <disease id="DI-04372">
        <name>Laurence-Moon syndrome</name>
        <acronym>LNMS</acronym>
        <description>An autosomal recessive syndrome characterized by progressive spinocerebellar degeneration, spastic paraplegia, intellectual disability, hypogonadism, dwarfism, and chorioretinopathy. Trichomegaly is absent.</description>
        <dbReference type="MIM" id="245800"/>
    </disease>
    <text>The disease is caused by variants affecting the gene represented in this entry.</text>
</comment>
<comment type="disease" evidence="12">
    <disease id="DI-04369">
        <name>Oliver-McFarlane syndrome</name>
        <acronym>OMCS</acronym>
        <description>A rare autosomal recessive, congenital syndrome characterized by trichomegaly, severe chorioretinal atrophy and multiple pituitary hormone deficiencies. It results in intellectual impairment and dwarfism, if untreated. Clinical features include hypogonadotropic hypogonadism during puberty, pigmentary retinal degeneration, ataxia, spastic paraplegia, and peripheral neuropathy.</description>
        <dbReference type="MIM" id="275400"/>
    </disease>
    <text>The disease is caused by variants affecting the gene represented in this entry.</text>
</comment>
<comment type="miscellaneous">
    <text evidence="14">Its specific chemical modification by certain organophosphorus (OP) compounds leads to distal axonopathy.</text>
</comment>
<comment type="similarity">
    <text evidence="16">Belongs to the NTE family.</text>
</comment>
<gene>
    <name evidence="19" type="primary">PNPLA6</name>
    <name type="synonym">NTE</name>
</gene>
<accession>Q8IY17</accession>
<accession>A6NGQ0</accession>
<accession>B4DFB9</accession>
<accession>B7Z7T2</accession>
<accession>F5H5K9</accession>
<accession>J3KQS3</accession>
<accession>O60859</accession>
<accession>Q86W58</accession>
<accession>Q9UG58</accession>